<comment type="function">
    <text evidence="1">ATP-binding RNA helicase involved in the biogenesis of 60S ribosomal subunits.</text>
</comment>
<comment type="catalytic activity">
    <reaction>
        <text>ATP + H2O = ADP + phosphate + H(+)</text>
        <dbReference type="Rhea" id="RHEA:13065"/>
        <dbReference type="ChEBI" id="CHEBI:15377"/>
        <dbReference type="ChEBI" id="CHEBI:15378"/>
        <dbReference type="ChEBI" id="CHEBI:30616"/>
        <dbReference type="ChEBI" id="CHEBI:43474"/>
        <dbReference type="ChEBI" id="CHEBI:456216"/>
        <dbReference type="EC" id="3.6.4.13"/>
    </reaction>
</comment>
<comment type="subcellular location">
    <subcellularLocation>
        <location evidence="1">Nucleus</location>
        <location evidence="1">Nucleolus</location>
    </subcellularLocation>
</comment>
<comment type="tissue specificity">
    <text evidence="5">Expressed in the germline tissue of the ovary.</text>
</comment>
<comment type="domain">
    <text>The Q motif is unique to and characteristic of the DEAD box family of RNA helicases and controls ATP binding and hydrolysis.</text>
</comment>
<comment type="similarity">
    <text evidence="6">Belongs to the DEAD box helicase family. DDX51/DBP6 subfamily.</text>
</comment>
<keyword id="KW-0067">ATP-binding</keyword>
<keyword id="KW-0347">Helicase</keyword>
<keyword id="KW-0378">Hydrolase</keyword>
<keyword id="KW-0547">Nucleotide-binding</keyword>
<keyword id="KW-0539">Nucleus</keyword>
<keyword id="KW-1185">Reference proteome</keyword>
<keyword id="KW-0690">Ribosome biogenesis</keyword>
<keyword id="KW-0694">RNA-binding</keyword>
<keyword id="KW-0698">rRNA processing</keyword>
<evidence type="ECO:0000250" key="1"/>
<evidence type="ECO:0000255" key="2">
    <source>
        <dbReference type="PROSITE-ProRule" id="PRU00541"/>
    </source>
</evidence>
<evidence type="ECO:0000255" key="3">
    <source>
        <dbReference type="PROSITE-ProRule" id="PRU00542"/>
    </source>
</evidence>
<evidence type="ECO:0000256" key="4">
    <source>
        <dbReference type="SAM" id="MobiDB-lite"/>
    </source>
</evidence>
<evidence type="ECO:0000269" key="5">
    <source>
    </source>
</evidence>
<evidence type="ECO:0000305" key="6"/>
<protein>
    <recommendedName>
        <fullName>Probable ATP-dependent RNA helicase Dbp73D</fullName>
        <shortName>DEAD box protein 73D</shortName>
        <ecNumber>3.6.4.13</ecNumber>
    </recommendedName>
</protein>
<gene>
    <name type="primary">Dbp73D</name>
    <name type="ORF">CG9680</name>
</gene>
<organism>
    <name type="scientific">Drosophila melanogaster</name>
    <name type="common">Fruit fly</name>
    <dbReference type="NCBI Taxonomy" id="7227"/>
    <lineage>
        <taxon>Eukaryota</taxon>
        <taxon>Metazoa</taxon>
        <taxon>Ecdysozoa</taxon>
        <taxon>Arthropoda</taxon>
        <taxon>Hexapoda</taxon>
        <taxon>Insecta</taxon>
        <taxon>Pterygota</taxon>
        <taxon>Neoptera</taxon>
        <taxon>Endopterygota</taxon>
        <taxon>Diptera</taxon>
        <taxon>Brachycera</taxon>
        <taxon>Muscomorpha</taxon>
        <taxon>Ephydroidea</taxon>
        <taxon>Drosophilidae</taxon>
        <taxon>Drosophila</taxon>
        <taxon>Sophophora</taxon>
    </lineage>
</organism>
<accession>P26802</accession>
<accession>Q9XZ18</accession>
<reference key="1">
    <citation type="journal article" date="1992" name="Nucleic Acids Res.">
        <title>Dbp73D, a Drosophila gene expressed in ovary, encodes a novel D-E-A-D box protein.</title>
        <authorList>
            <person name="Patterson L.F."/>
            <person name="Harvey M."/>
            <person name="Lasko P.F."/>
        </authorList>
    </citation>
    <scope>NUCLEOTIDE SEQUENCE [GENOMIC DNA]</scope>
    <scope>TISSUE SPECIFICITY</scope>
    <source>
        <strain>Canton-S</strain>
    </source>
</reference>
<reference key="2">
    <citation type="submission" date="1994-06" db="EMBL/GenBank/DDBJ databases">
        <authorList>
            <person name="Lasko P.F."/>
        </authorList>
    </citation>
    <scope>SEQUENCE REVISION</scope>
</reference>
<reference key="3">
    <citation type="journal article" date="2000" name="Science">
        <title>The genome sequence of Drosophila melanogaster.</title>
        <authorList>
            <person name="Adams M.D."/>
            <person name="Celniker S.E."/>
            <person name="Holt R.A."/>
            <person name="Evans C.A."/>
            <person name="Gocayne J.D."/>
            <person name="Amanatides P.G."/>
            <person name="Scherer S.E."/>
            <person name="Li P.W."/>
            <person name="Hoskins R.A."/>
            <person name="Galle R.F."/>
            <person name="George R.A."/>
            <person name="Lewis S.E."/>
            <person name="Richards S."/>
            <person name="Ashburner M."/>
            <person name="Henderson S.N."/>
            <person name="Sutton G.G."/>
            <person name="Wortman J.R."/>
            <person name="Yandell M.D."/>
            <person name="Zhang Q."/>
            <person name="Chen L.X."/>
            <person name="Brandon R.C."/>
            <person name="Rogers Y.-H.C."/>
            <person name="Blazej R.G."/>
            <person name="Champe M."/>
            <person name="Pfeiffer B.D."/>
            <person name="Wan K.H."/>
            <person name="Doyle C."/>
            <person name="Baxter E.G."/>
            <person name="Helt G."/>
            <person name="Nelson C.R."/>
            <person name="Miklos G.L.G."/>
            <person name="Abril J.F."/>
            <person name="Agbayani A."/>
            <person name="An H.-J."/>
            <person name="Andrews-Pfannkoch C."/>
            <person name="Baldwin D."/>
            <person name="Ballew R.M."/>
            <person name="Basu A."/>
            <person name="Baxendale J."/>
            <person name="Bayraktaroglu L."/>
            <person name="Beasley E.M."/>
            <person name="Beeson K.Y."/>
            <person name="Benos P.V."/>
            <person name="Berman B.P."/>
            <person name="Bhandari D."/>
            <person name="Bolshakov S."/>
            <person name="Borkova D."/>
            <person name="Botchan M.R."/>
            <person name="Bouck J."/>
            <person name="Brokstein P."/>
            <person name="Brottier P."/>
            <person name="Burtis K.C."/>
            <person name="Busam D.A."/>
            <person name="Butler H."/>
            <person name="Cadieu E."/>
            <person name="Center A."/>
            <person name="Chandra I."/>
            <person name="Cherry J.M."/>
            <person name="Cawley S."/>
            <person name="Dahlke C."/>
            <person name="Davenport L.B."/>
            <person name="Davies P."/>
            <person name="de Pablos B."/>
            <person name="Delcher A."/>
            <person name="Deng Z."/>
            <person name="Mays A.D."/>
            <person name="Dew I."/>
            <person name="Dietz S.M."/>
            <person name="Dodson K."/>
            <person name="Doup L.E."/>
            <person name="Downes M."/>
            <person name="Dugan-Rocha S."/>
            <person name="Dunkov B.C."/>
            <person name="Dunn P."/>
            <person name="Durbin K.J."/>
            <person name="Evangelista C.C."/>
            <person name="Ferraz C."/>
            <person name="Ferriera S."/>
            <person name="Fleischmann W."/>
            <person name="Fosler C."/>
            <person name="Gabrielian A.E."/>
            <person name="Garg N.S."/>
            <person name="Gelbart W.M."/>
            <person name="Glasser K."/>
            <person name="Glodek A."/>
            <person name="Gong F."/>
            <person name="Gorrell J.H."/>
            <person name="Gu Z."/>
            <person name="Guan P."/>
            <person name="Harris M."/>
            <person name="Harris N.L."/>
            <person name="Harvey D.A."/>
            <person name="Heiman T.J."/>
            <person name="Hernandez J.R."/>
            <person name="Houck J."/>
            <person name="Hostin D."/>
            <person name="Houston K.A."/>
            <person name="Howland T.J."/>
            <person name="Wei M.-H."/>
            <person name="Ibegwam C."/>
            <person name="Jalali M."/>
            <person name="Kalush F."/>
            <person name="Karpen G.H."/>
            <person name="Ke Z."/>
            <person name="Kennison J.A."/>
            <person name="Ketchum K.A."/>
            <person name="Kimmel B.E."/>
            <person name="Kodira C.D."/>
            <person name="Kraft C.L."/>
            <person name="Kravitz S."/>
            <person name="Kulp D."/>
            <person name="Lai Z."/>
            <person name="Lasko P."/>
            <person name="Lei Y."/>
            <person name="Levitsky A.A."/>
            <person name="Li J.H."/>
            <person name="Li Z."/>
            <person name="Liang Y."/>
            <person name="Lin X."/>
            <person name="Liu X."/>
            <person name="Mattei B."/>
            <person name="McIntosh T.C."/>
            <person name="McLeod M.P."/>
            <person name="McPherson D."/>
            <person name="Merkulov G."/>
            <person name="Milshina N.V."/>
            <person name="Mobarry C."/>
            <person name="Morris J."/>
            <person name="Moshrefi A."/>
            <person name="Mount S.M."/>
            <person name="Moy M."/>
            <person name="Murphy B."/>
            <person name="Murphy L."/>
            <person name="Muzny D.M."/>
            <person name="Nelson D.L."/>
            <person name="Nelson D.R."/>
            <person name="Nelson K.A."/>
            <person name="Nixon K."/>
            <person name="Nusskern D.R."/>
            <person name="Pacleb J.M."/>
            <person name="Palazzolo M."/>
            <person name="Pittman G.S."/>
            <person name="Pan S."/>
            <person name="Pollard J."/>
            <person name="Puri V."/>
            <person name="Reese M.G."/>
            <person name="Reinert K."/>
            <person name="Remington K."/>
            <person name="Saunders R.D.C."/>
            <person name="Scheeler F."/>
            <person name="Shen H."/>
            <person name="Shue B.C."/>
            <person name="Siden-Kiamos I."/>
            <person name="Simpson M."/>
            <person name="Skupski M.P."/>
            <person name="Smith T.J."/>
            <person name="Spier E."/>
            <person name="Spradling A.C."/>
            <person name="Stapleton M."/>
            <person name="Strong R."/>
            <person name="Sun E."/>
            <person name="Svirskas R."/>
            <person name="Tector C."/>
            <person name="Turner R."/>
            <person name="Venter E."/>
            <person name="Wang A.H."/>
            <person name="Wang X."/>
            <person name="Wang Z.-Y."/>
            <person name="Wassarman D.A."/>
            <person name="Weinstock G.M."/>
            <person name="Weissenbach J."/>
            <person name="Williams S.M."/>
            <person name="Woodage T."/>
            <person name="Worley K.C."/>
            <person name="Wu D."/>
            <person name="Yang S."/>
            <person name="Yao Q.A."/>
            <person name="Ye J."/>
            <person name="Yeh R.-F."/>
            <person name="Zaveri J.S."/>
            <person name="Zhan M."/>
            <person name="Zhang G."/>
            <person name="Zhao Q."/>
            <person name="Zheng L."/>
            <person name="Zheng X.H."/>
            <person name="Zhong F.N."/>
            <person name="Zhong W."/>
            <person name="Zhou X."/>
            <person name="Zhu S.C."/>
            <person name="Zhu X."/>
            <person name="Smith H.O."/>
            <person name="Gibbs R.A."/>
            <person name="Myers E.W."/>
            <person name="Rubin G.M."/>
            <person name="Venter J.C."/>
        </authorList>
    </citation>
    <scope>NUCLEOTIDE SEQUENCE [LARGE SCALE GENOMIC DNA]</scope>
    <source>
        <strain>Berkeley</strain>
    </source>
</reference>
<reference key="4">
    <citation type="journal article" date="2002" name="Genome Biol.">
        <title>Annotation of the Drosophila melanogaster euchromatic genome: a systematic review.</title>
        <authorList>
            <person name="Misra S."/>
            <person name="Crosby M.A."/>
            <person name="Mungall C.J."/>
            <person name="Matthews B.B."/>
            <person name="Campbell K.S."/>
            <person name="Hradecky P."/>
            <person name="Huang Y."/>
            <person name="Kaminker J.S."/>
            <person name="Millburn G.H."/>
            <person name="Prochnik S.E."/>
            <person name="Smith C.D."/>
            <person name="Tupy J.L."/>
            <person name="Whitfield E.J."/>
            <person name="Bayraktaroglu L."/>
            <person name="Berman B.P."/>
            <person name="Bettencourt B.R."/>
            <person name="Celniker S.E."/>
            <person name="de Grey A.D.N.J."/>
            <person name="Drysdale R.A."/>
            <person name="Harris N.L."/>
            <person name="Richter J."/>
            <person name="Russo S."/>
            <person name="Schroeder A.J."/>
            <person name="Shu S.Q."/>
            <person name="Stapleton M."/>
            <person name="Yamada C."/>
            <person name="Ashburner M."/>
            <person name="Gelbart W.M."/>
            <person name="Rubin G.M."/>
            <person name="Lewis S.E."/>
        </authorList>
    </citation>
    <scope>GENOME REANNOTATION</scope>
    <source>
        <strain>Berkeley</strain>
    </source>
</reference>
<reference key="5">
    <citation type="journal article" date="2002" name="Genome Biol.">
        <title>A Drosophila full-length cDNA resource.</title>
        <authorList>
            <person name="Stapleton M."/>
            <person name="Carlson J.W."/>
            <person name="Brokstein P."/>
            <person name="Yu C."/>
            <person name="Champe M."/>
            <person name="George R.A."/>
            <person name="Guarin H."/>
            <person name="Kronmiller B."/>
            <person name="Pacleb J.M."/>
            <person name="Park S."/>
            <person name="Wan K.H."/>
            <person name="Rubin G.M."/>
            <person name="Celniker S.E."/>
        </authorList>
    </citation>
    <scope>NUCLEOTIDE SEQUENCE [LARGE SCALE MRNA]</scope>
    <source>
        <strain>Berkeley</strain>
        <tissue>Embryo</tissue>
    </source>
</reference>
<reference key="6">
    <citation type="submission" date="2003-08" db="EMBL/GenBank/DDBJ databases">
        <authorList>
            <person name="Stapleton M."/>
            <person name="Brokstein P."/>
            <person name="Hong L."/>
            <person name="Agbayani A."/>
            <person name="Carlson J.W."/>
            <person name="Champe M."/>
            <person name="Chavez C."/>
            <person name="Dorsett V."/>
            <person name="Dresnek D."/>
            <person name="Farfan D."/>
            <person name="Frise E."/>
            <person name="George R.A."/>
            <person name="Gonzalez M."/>
            <person name="Guarin H."/>
            <person name="Kronmiller B."/>
            <person name="Li P.W."/>
            <person name="Liao G."/>
            <person name="Miranda A."/>
            <person name="Mungall C.J."/>
            <person name="Nunoo J."/>
            <person name="Pacleb J.M."/>
            <person name="Paragas V."/>
            <person name="Park S."/>
            <person name="Patel S."/>
            <person name="Phouanenavong S."/>
            <person name="Wan K.H."/>
            <person name="Yu C."/>
            <person name="Lewis S.E."/>
            <person name="Rubin G.M."/>
            <person name="Celniker S.E."/>
        </authorList>
    </citation>
    <scope>NUCLEOTIDE SEQUENCE [LARGE SCALE MRNA]</scope>
    <source>
        <strain>Berkeley</strain>
        <tissue>Embryo</tissue>
    </source>
</reference>
<sequence>MELFTVNRYTEDLKEQKDGAQGTNNEDEILQKLLKKAAKRKRKHEAIEVVETPILEKETSDVKESESKEEQVEEPEKPLEVVQEEDVPSNEFQVLGGDDSAAKKKKVQMQLPNWLAHPTIIEGGSLQPEEEVPASEAIDQLDYLEKYTCQALKQMKIKRLFPVQKQVIPWILEAHAKPPPFRPRDICVSAPTGSGKTLAFAIPIVQLLSQRVDCKVRALVVLPVAELALQVYRVISELCSKTELEVCLLSKQHKLEDEQEKLVEQYKGKYYSKADIVVTTPGRLVDHLHATKGFCLKSLKFLVIDEADRIMDAVFQNWLYHLDSHVKETTDQLLAGTQAPLCYAELQASFGKQPHKLLFSATLSQDPEKLQDLRLFQPRLFATVLTMPVLKDATEEGADTEALTDPGQFVGRYTTPAELTEQYCVTELRLKPLTVFALVEKYKWKRFLCFTNSSDQATRLTFVLKVLFQKYSTKVSELSGNLSAKVRNERLRDFAAGKINGLICSDALARGIDVADVDVVLSYETPRHITTYIHRVGRTARAGRKGTAVTVLTEQDMTLFKKILSDANKGLGEEIHVSPDIEIQHAVEYKEALAGLRSEKVKNKNQKMAEKNRVATKALIHKKQEETATVRPLTLMEKLQIKANEIVQSSKKSSETKNSKTKADKTKYQPKETKKQIIAKQLKAIEN</sequence>
<dbReference type="EC" id="3.6.4.13"/>
<dbReference type="EMBL" id="M74824">
    <property type="protein sequence ID" value="AAC14192.1"/>
    <property type="molecule type" value="Genomic_DNA"/>
</dbReference>
<dbReference type="EMBL" id="AE014296">
    <property type="protein sequence ID" value="AAF49419.1"/>
    <property type="molecule type" value="Genomic_DNA"/>
</dbReference>
<dbReference type="EMBL" id="AF132173">
    <property type="protein sequence ID" value="AAD34761.1"/>
    <property type="molecule type" value="mRNA"/>
</dbReference>
<dbReference type="EMBL" id="BT010045">
    <property type="protein sequence ID" value="AAQ22514.1"/>
    <property type="molecule type" value="mRNA"/>
</dbReference>
<dbReference type="PIR" id="S28762">
    <property type="entry name" value="S28762"/>
</dbReference>
<dbReference type="RefSeq" id="NP_476833.1">
    <property type="nucleotide sequence ID" value="NM_057485.4"/>
</dbReference>
<dbReference type="SMR" id="P26802"/>
<dbReference type="BioGRID" id="65170">
    <property type="interactions" value="2"/>
</dbReference>
<dbReference type="FunCoup" id="P26802">
    <property type="interactions" value="2590"/>
</dbReference>
<dbReference type="IntAct" id="P26802">
    <property type="interactions" value="7"/>
</dbReference>
<dbReference type="STRING" id="7227.FBpp0075106"/>
<dbReference type="PaxDb" id="7227-FBpp0075106"/>
<dbReference type="EnsemblMetazoa" id="FBtr0075347">
    <property type="protein sequence ID" value="FBpp0075106"/>
    <property type="gene ID" value="FBgn0004556"/>
</dbReference>
<dbReference type="GeneID" id="39871"/>
<dbReference type="KEGG" id="dme:Dmel_CG9680"/>
<dbReference type="AGR" id="FB:FBgn0004556"/>
<dbReference type="CTD" id="39871"/>
<dbReference type="FlyBase" id="FBgn0004556">
    <property type="gene designation" value="Dbp73D"/>
</dbReference>
<dbReference type="VEuPathDB" id="VectorBase:FBgn0004556"/>
<dbReference type="eggNOG" id="KOG0350">
    <property type="taxonomic scope" value="Eukaryota"/>
</dbReference>
<dbReference type="GeneTree" id="ENSGT00550000075141"/>
<dbReference type="HOGENOM" id="CLU_003041_15_3_1"/>
<dbReference type="InParanoid" id="P26802"/>
<dbReference type="OMA" id="DIEIQHA"/>
<dbReference type="OrthoDB" id="3370at2759"/>
<dbReference type="PhylomeDB" id="P26802"/>
<dbReference type="SignaLink" id="P26802"/>
<dbReference type="BioGRID-ORCS" id="39871">
    <property type="hits" value="0 hits in 1 CRISPR screen"/>
</dbReference>
<dbReference type="GenomeRNAi" id="39871"/>
<dbReference type="PRO" id="PR:P26802"/>
<dbReference type="Proteomes" id="UP000000803">
    <property type="component" value="Chromosome 3L"/>
</dbReference>
<dbReference type="Bgee" id="FBgn0004556">
    <property type="expression patterns" value="Expressed in posterior terminal follicle cell in ovary and 37 other cell types or tissues"/>
</dbReference>
<dbReference type="GO" id="GO:0005730">
    <property type="term" value="C:nucleolus"/>
    <property type="evidence" value="ECO:0007669"/>
    <property type="project" value="UniProtKB-SubCell"/>
</dbReference>
<dbReference type="GO" id="GO:0005634">
    <property type="term" value="C:nucleus"/>
    <property type="evidence" value="ECO:0000318"/>
    <property type="project" value="GO_Central"/>
</dbReference>
<dbReference type="GO" id="GO:0005524">
    <property type="term" value="F:ATP binding"/>
    <property type="evidence" value="ECO:0007669"/>
    <property type="project" value="UniProtKB-KW"/>
</dbReference>
<dbReference type="GO" id="GO:0016887">
    <property type="term" value="F:ATP hydrolysis activity"/>
    <property type="evidence" value="ECO:0007669"/>
    <property type="project" value="RHEA"/>
</dbReference>
<dbReference type="GO" id="GO:0003723">
    <property type="term" value="F:RNA binding"/>
    <property type="evidence" value="ECO:0007669"/>
    <property type="project" value="UniProtKB-KW"/>
</dbReference>
<dbReference type="GO" id="GO:0003724">
    <property type="term" value="F:RNA helicase activity"/>
    <property type="evidence" value="ECO:0000303"/>
    <property type="project" value="FlyBase"/>
</dbReference>
<dbReference type="GO" id="GO:0006364">
    <property type="term" value="P:rRNA processing"/>
    <property type="evidence" value="ECO:0007669"/>
    <property type="project" value="UniProtKB-KW"/>
</dbReference>
<dbReference type="CDD" id="cd17956">
    <property type="entry name" value="DEADc_DDX51"/>
    <property type="match status" value="1"/>
</dbReference>
<dbReference type="CDD" id="cd18787">
    <property type="entry name" value="SF2_C_DEAD"/>
    <property type="match status" value="1"/>
</dbReference>
<dbReference type="Gene3D" id="3.40.50.300">
    <property type="entry name" value="P-loop containing nucleotide triphosphate hydrolases"/>
    <property type="match status" value="2"/>
</dbReference>
<dbReference type="InterPro" id="IPR011545">
    <property type="entry name" value="DEAD/DEAH_box_helicase_dom"/>
</dbReference>
<dbReference type="InterPro" id="IPR014001">
    <property type="entry name" value="Helicase_ATP-bd"/>
</dbReference>
<dbReference type="InterPro" id="IPR001650">
    <property type="entry name" value="Helicase_C-like"/>
</dbReference>
<dbReference type="InterPro" id="IPR027417">
    <property type="entry name" value="P-loop_NTPase"/>
</dbReference>
<dbReference type="InterPro" id="IPR000629">
    <property type="entry name" value="RNA-helicase_DEAD-box_CS"/>
</dbReference>
<dbReference type="PANTHER" id="PTHR24031">
    <property type="entry name" value="RNA HELICASE"/>
    <property type="match status" value="1"/>
</dbReference>
<dbReference type="Pfam" id="PF00270">
    <property type="entry name" value="DEAD"/>
    <property type="match status" value="1"/>
</dbReference>
<dbReference type="Pfam" id="PF00271">
    <property type="entry name" value="Helicase_C"/>
    <property type="match status" value="1"/>
</dbReference>
<dbReference type="SMART" id="SM00487">
    <property type="entry name" value="DEXDc"/>
    <property type="match status" value="1"/>
</dbReference>
<dbReference type="SMART" id="SM00490">
    <property type="entry name" value="HELICc"/>
    <property type="match status" value="1"/>
</dbReference>
<dbReference type="SUPFAM" id="SSF52540">
    <property type="entry name" value="P-loop containing nucleoside triphosphate hydrolases"/>
    <property type="match status" value="1"/>
</dbReference>
<dbReference type="PROSITE" id="PS00039">
    <property type="entry name" value="DEAD_ATP_HELICASE"/>
    <property type="match status" value="1"/>
</dbReference>
<dbReference type="PROSITE" id="PS51192">
    <property type="entry name" value="HELICASE_ATP_BIND_1"/>
    <property type="match status" value="1"/>
</dbReference>
<dbReference type="PROSITE" id="PS51194">
    <property type="entry name" value="HELICASE_CTER"/>
    <property type="match status" value="1"/>
</dbReference>
<proteinExistence type="evidence at transcript level"/>
<feature type="chain" id="PRO_0000055005" description="Probable ATP-dependent RNA helicase Dbp73D">
    <location>
        <begin position="1"/>
        <end position="687"/>
    </location>
</feature>
<feature type="domain" description="Helicase ATP-binding" evidence="2">
    <location>
        <begin position="177"/>
        <end position="381"/>
    </location>
</feature>
<feature type="domain" description="Helicase C-terminal" evidence="3">
    <location>
        <begin position="434"/>
        <end position="583"/>
    </location>
</feature>
<feature type="region of interest" description="Disordered" evidence="4">
    <location>
        <begin position="1"/>
        <end position="26"/>
    </location>
</feature>
<feature type="region of interest" description="Disordered" evidence="4">
    <location>
        <begin position="52"/>
        <end position="87"/>
    </location>
</feature>
<feature type="region of interest" description="Disordered" evidence="4">
    <location>
        <begin position="646"/>
        <end position="675"/>
    </location>
</feature>
<feature type="short sequence motif" description="Q motif">
    <location>
        <begin position="160"/>
        <end position="168"/>
    </location>
</feature>
<feature type="short sequence motif" description="DEAD box">
    <location>
        <begin position="305"/>
        <end position="308"/>
    </location>
</feature>
<feature type="compositionally biased region" description="Basic and acidic residues" evidence="4">
    <location>
        <begin position="9"/>
        <end position="18"/>
    </location>
</feature>
<feature type="compositionally biased region" description="Basic and acidic residues" evidence="4">
    <location>
        <begin position="54"/>
        <end position="79"/>
    </location>
</feature>
<feature type="compositionally biased region" description="Basic and acidic residues" evidence="4">
    <location>
        <begin position="652"/>
        <end position="675"/>
    </location>
</feature>
<feature type="binding site" evidence="2">
    <location>
        <begin position="190"/>
        <end position="197"/>
    </location>
    <ligand>
        <name>ATP</name>
        <dbReference type="ChEBI" id="CHEBI:30616"/>
    </ligand>
</feature>
<feature type="sequence conflict" description="In Ref. 1; AAC14192." evidence="6" ref="1">
    <original>L</original>
    <variation>P</variation>
    <location>
        <position position="55"/>
    </location>
</feature>
<feature type="sequence conflict" description="In Ref. 1; AAC14192." evidence="6" ref="1">
    <original>D</original>
    <variation>V</variation>
    <location>
        <position position="86"/>
    </location>
</feature>
<feature type="sequence conflict" description="In Ref. 1; AAC14192." evidence="6" ref="1">
    <original>AG</original>
    <variation>PR</variation>
    <location>
        <begin position="594"/>
        <end position="595"/>
    </location>
</feature>
<feature type="sequence conflict" description="In Ref. 1; AAC14192." evidence="6" ref="1">
    <original>KALIHKKQEETATVRPLTLMEKLQIKANEIVQSSKKSSETKNSKTKADKTKYQPKETKKQIIAKQLKAIEN</original>
    <variation>QGIDPQETGGNGHSSSTDVDGKVANQSE</variation>
    <location>
        <begin position="617"/>
        <end position="687"/>
    </location>
</feature>
<name>DDX51_DROME</name>